<organism>
    <name type="scientific">Shewanella piezotolerans (strain WP3 / JCM 13877)</name>
    <dbReference type="NCBI Taxonomy" id="225849"/>
    <lineage>
        <taxon>Bacteria</taxon>
        <taxon>Pseudomonadati</taxon>
        <taxon>Pseudomonadota</taxon>
        <taxon>Gammaproteobacteria</taxon>
        <taxon>Alteromonadales</taxon>
        <taxon>Shewanellaceae</taxon>
        <taxon>Shewanella</taxon>
    </lineage>
</organism>
<protein>
    <recommendedName>
        <fullName evidence="1">DNA-directed RNA polymerase subunit beta</fullName>
        <shortName evidence="1">RNAP subunit beta</shortName>
        <ecNumber evidence="1">2.7.7.6</ecNumber>
    </recommendedName>
    <alternativeName>
        <fullName evidence="1">RNA polymerase subunit beta</fullName>
    </alternativeName>
    <alternativeName>
        <fullName evidence="1">Transcriptase subunit beta</fullName>
    </alternativeName>
</protein>
<feature type="chain" id="PRO_1000141737" description="DNA-directed RNA polymerase subunit beta">
    <location>
        <begin position="1"/>
        <end position="1343"/>
    </location>
</feature>
<accession>B8CNC5</accession>
<name>RPOB_SHEPW</name>
<evidence type="ECO:0000255" key="1">
    <source>
        <dbReference type="HAMAP-Rule" id="MF_01321"/>
    </source>
</evidence>
<reference key="1">
    <citation type="journal article" date="2008" name="PLoS ONE">
        <title>Environmental adaptation: genomic analysis of the piezotolerant and psychrotolerant deep-sea iron reducing bacterium Shewanella piezotolerans WP3.</title>
        <authorList>
            <person name="Wang F."/>
            <person name="Wang J."/>
            <person name="Jian H."/>
            <person name="Zhang B."/>
            <person name="Li S."/>
            <person name="Wang F."/>
            <person name="Zeng X."/>
            <person name="Gao L."/>
            <person name="Bartlett D.H."/>
            <person name="Yu J."/>
            <person name="Hu S."/>
            <person name="Xiao X."/>
        </authorList>
    </citation>
    <scope>NUCLEOTIDE SEQUENCE [LARGE SCALE GENOMIC DNA]</scope>
    <source>
        <strain>WP3 / JCM 13877</strain>
    </source>
</reference>
<dbReference type="EC" id="2.7.7.6" evidence="1"/>
<dbReference type="EMBL" id="CP000472">
    <property type="protein sequence ID" value="ACJ28759.1"/>
    <property type="molecule type" value="Genomic_DNA"/>
</dbReference>
<dbReference type="RefSeq" id="WP_020912132.1">
    <property type="nucleotide sequence ID" value="NC_011566.1"/>
</dbReference>
<dbReference type="SMR" id="B8CNC5"/>
<dbReference type="STRING" id="225849.swp_2003"/>
<dbReference type="KEGG" id="swp:swp_2003"/>
<dbReference type="eggNOG" id="COG0085">
    <property type="taxonomic scope" value="Bacteria"/>
</dbReference>
<dbReference type="HOGENOM" id="CLU_000524_4_3_6"/>
<dbReference type="OrthoDB" id="9803954at2"/>
<dbReference type="Proteomes" id="UP000000753">
    <property type="component" value="Chromosome"/>
</dbReference>
<dbReference type="GO" id="GO:0000428">
    <property type="term" value="C:DNA-directed RNA polymerase complex"/>
    <property type="evidence" value="ECO:0007669"/>
    <property type="project" value="UniProtKB-KW"/>
</dbReference>
<dbReference type="GO" id="GO:0003677">
    <property type="term" value="F:DNA binding"/>
    <property type="evidence" value="ECO:0007669"/>
    <property type="project" value="UniProtKB-UniRule"/>
</dbReference>
<dbReference type="GO" id="GO:0003899">
    <property type="term" value="F:DNA-directed RNA polymerase activity"/>
    <property type="evidence" value="ECO:0007669"/>
    <property type="project" value="UniProtKB-UniRule"/>
</dbReference>
<dbReference type="GO" id="GO:0032549">
    <property type="term" value="F:ribonucleoside binding"/>
    <property type="evidence" value="ECO:0007669"/>
    <property type="project" value="InterPro"/>
</dbReference>
<dbReference type="GO" id="GO:0006351">
    <property type="term" value="P:DNA-templated transcription"/>
    <property type="evidence" value="ECO:0007669"/>
    <property type="project" value="UniProtKB-UniRule"/>
</dbReference>
<dbReference type="CDD" id="cd00653">
    <property type="entry name" value="RNA_pol_B_RPB2"/>
    <property type="match status" value="1"/>
</dbReference>
<dbReference type="FunFam" id="2.40.270.10:FF:000003">
    <property type="entry name" value="DNA-directed RNA polymerase subunit beta"/>
    <property type="match status" value="1"/>
</dbReference>
<dbReference type="FunFam" id="2.40.270.10:FF:000004">
    <property type="entry name" value="DNA-directed RNA polymerase subunit beta"/>
    <property type="match status" value="1"/>
</dbReference>
<dbReference type="FunFam" id="2.40.50.100:FF:000006">
    <property type="entry name" value="DNA-directed RNA polymerase subunit beta"/>
    <property type="match status" value="1"/>
</dbReference>
<dbReference type="FunFam" id="2.40.50.150:FF:000001">
    <property type="entry name" value="DNA-directed RNA polymerase subunit beta"/>
    <property type="match status" value="1"/>
</dbReference>
<dbReference type="FunFam" id="3.90.1100.10:FF:000002">
    <property type="entry name" value="DNA-directed RNA polymerase subunit beta"/>
    <property type="match status" value="1"/>
</dbReference>
<dbReference type="FunFam" id="3.90.1110.10:FF:000001">
    <property type="entry name" value="DNA-directed RNA polymerase subunit beta"/>
    <property type="match status" value="1"/>
</dbReference>
<dbReference type="FunFam" id="3.90.1110.10:FF:000004">
    <property type="entry name" value="DNA-directed RNA polymerase subunit beta"/>
    <property type="match status" value="1"/>
</dbReference>
<dbReference type="FunFam" id="3.90.1800.10:FF:000001">
    <property type="entry name" value="DNA-directed RNA polymerase subunit beta"/>
    <property type="match status" value="1"/>
</dbReference>
<dbReference type="Gene3D" id="2.40.50.100">
    <property type="match status" value="1"/>
</dbReference>
<dbReference type="Gene3D" id="2.40.50.150">
    <property type="match status" value="1"/>
</dbReference>
<dbReference type="Gene3D" id="3.90.1100.10">
    <property type="match status" value="2"/>
</dbReference>
<dbReference type="Gene3D" id="2.30.150.10">
    <property type="entry name" value="DNA-directed RNA polymerase, beta subunit, external 1 domain"/>
    <property type="match status" value="1"/>
</dbReference>
<dbReference type="Gene3D" id="2.40.270.10">
    <property type="entry name" value="DNA-directed RNA polymerase, subunit 2, domain 6"/>
    <property type="match status" value="2"/>
</dbReference>
<dbReference type="Gene3D" id="3.90.1800.10">
    <property type="entry name" value="RNA polymerase alpha subunit dimerisation domain"/>
    <property type="match status" value="1"/>
</dbReference>
<dbReference type="Gene3D" id="3.90.1110.10">
    <property type="entry name" value="RNA polymerase Rpb2, domain 2"/>
    <property type="match status" value="2"/>
</dbReference>
<dbReference type="HAMAP" id="MF_01321">
    <property type="entry name" value="RNApol_bact_RpoB"/>
    <property type="match status" value="1"/>
</dbReference>
<dbReference type="InterPro" id="IPR042107">
    <property type="entry name" value="DNA-dir_RNA_pol_bsu_ext_1_sf"/>
</dbReference>
<dbReference type="InterPro" id="IPR019462">
    <property type="entry name" value="DNA-dir_RNA_pol_bsu_external_1"/>
</dbReference>
<dbReference type="InterPro" id="IPR015712">
    <property type="entry name" value="DNA-dir_RNA_pol_su2"/>
</dbReference>
<dbReference type="InterPro" id="IPR007120">
    <property type="entry name" value="DNA-dir_RNAP_su2_dom"/>
</dbReference>
<dbReference type="InterPro" id="IPR037033">
    <property type="entry name" value="DNA-dir_RNAP_su2_hyb_sf"/>
</dbReference>
<dbReference type="InterPro" id="IPR010243">
    <property type="entry name" value="RNA_pol_bsu_bac"/>
</dbReference>
<dbReference type="InterPro" id="IPR007121">
    <property type="entry name" value="RNA_pol_bsu_CS"/>
</dbReference>
<dbReference type="InterPro" id="IPR007644">
    <property type="entry name" value="RNA_pol_bsu_protrusion"/>
</dbReference>
<dbReference type="InterPro" id="IPR007642">
    <property type="entry name" value="RNA_pol_Rpb2_2"/>
</dbReference>
<dbReference type="InterPro" id="IPR037034">
    <property type="entry name" value="RNA_pol_Rpb2_2_sf"/>
</dbReference>
<dbReference type="InterPro" id="IPR007645">
    <property type="entry name" value="RNA_pol_Rpb2_3"/>
</dbReference>
<dbReference type="InterPro" id="IPR007641">
    <property type="entry name" value="RNA_pol_Rpb2_7"/>
</dbReference>
<dbReference type="InterPro" id="IPR014724">
    <property type="entry name" value="RNA_pol_RPB2_OB-fold"/>
</dbReference>
<dbReference type="NCBIfam" id="NF001616">
    <property type="entry name" value="PRK00405.1"/>
    <property type="match status" value="1"/>
</dbReference>
<dbReference type="NCBIfam" id="TIGR02013">
    <property type="entry name" value="rpoB"/>
    <property type="match status" value="1"/>
</dbReference>
<dbReference type="PANTHER" id="PTHR20856">
    <property type="entry name" value="DNA-DIRECTED RNA POLYMERASE I SUBUNIT 2"/>
    <property type="match status" value="1"/>
</dbReference>
<dbReference type="Pfam" id="PF04563">
    <property type="entry name" value="RNA_pol_Rpb2_1"/>
    <property type="match status" value="1"/>
</dbReference>
<dbReference type="Pfam" id="PF04561">
    <property type="entry name" value="RNA_pol_Rpb2_2"/>
    <property type="match status" value="2"/>
</dbReference>
<dbReference type="Pfam" id="PF04565">
    <property type="entry name" value="RNA_pol_Rpb2_3"/>
    <property type="match status" value="1"/>
</dbReference>
<dbReference type="Pfam" id="PF10385">
    <property type="entry name" value="RNA_pol_Rpb2_45"/>
    <property type="match status" value="1"/>
</dbReference>
<dbReference type="Pfam" id="PF00562">
    <property type="entry name" value="RNA_pol_Rpb2_6"/>
    <property type="match status" value="1"/>
</dbReference>
<dbReference type="Pfam" id="PF04560">
    <property type="entry name" value="RNA_pol_Rpb2_7"/>
    <property type="match status" value="1"/>
</dbReference>
<dbReference type="SUPFAM" id="SSF64484">
    <property type="entry name" value="beta and beta-prime subunits of DNA dependent RNA-polymerase"/>
    <property type="match status" value="1"/>
</dbReference>
<dbReference type="PROSITE" id="PS01166">
    <property type="entry name" value="RNA_POL_BETA"/>
    <property type="match status" value="1"/>
</dbReference>
<comment type="function">
    <text evidence="1">DNA-dependent RNA polymerase catalyzes the transcription of DNA into RNA using the four ribonucleoside triphosphates as substrates.</text>
</comment>
<comment type="catalytic activity">
    <reaction evidence="1">
        <text>RNA(n) + a ribonucleoside 5'-triphosphate = RNA(n+1) + diphosphate</text>
        <dbReference type="Rhea" id="RHEA:21248"/>
        <dbReference type="Rhea" id="RHEA-COMP:14527"/>
        <dbReference type="Rhea" id="RHEA-COMP:17342"/>
        <dbReference type="ChEBI" id="CHEBI:33019"/>
        <dbReference type="ChEBI" id="CHEBI:61557"/>
        <dbReference type="ChEBI" id="CHEBI:140395"/>
        <dbReference type="EC" id="2.7.7.6"/>
    </reaction>
</comment>
<comment type="subunit">
    <text evidence="1">The RNAP catalytic core consists of 2 alpha, 1 beta, 1 beta' and 1 omega subunit. When a sigma factor is associated with the core the holoenzyme is formed, which can initiate transcription.</text>
</comment>
<comment type="similarity">
    <text evidence="1">Belongs to the RNA polymerase beta chain family.</text>
</comment>
<keyword id="KW-0240">DNA-directed RNA polymerase</keyword>
<keyword id="KW-0548">Nucleotidyltransferase</keyword>
<keyword id="KW-0804">Transcription</keyword>
<keyword id="KW-0808">Transferase</keyword>
<gene>
    <name evidence="1" type="primary">rpoB</name>
    <name type="ordered locus">swp_2003</name>
</gene>
<sequence length="1343" mass="149664">MVYSYSEKKRIRKDFGKRQKVLDIPYLLSIQLDSFKKFTDQDPTGERGFEAAFRSVFPIKSFSGNSELQYVSYKLGEPVFDVKECQIRGITYSAPLRVKLRMVLYDREAAPGTVKDIKEQEVYMGDIPLMTDNGTFVINGTERVIVSQLHRSPGVFFDHDRGKTHSSGKVLYNARIIPYRGSWLDFEFDPKDALFVRIDRRRKLAASIILRALDYSTQDILDLFFDRVNFKIKQDSLVMDLVADRLRGETASYDIKDAEGTVLVEKGRRITARHIRQLEKTNTTELEVPVEYIAGKISGQDYIDPDTGEVLVSANAEIGLEDLAKLSLAGIKEVSTLYINELDNGAYISDTLRIDSTTNRLEALVEIYRMMRPGEPPTKDAAEALFNNLFFSEERYDLSKVGRMKFNRRLSIDDDEGTGILSKEDIVAVMKNIIAIRNGLDEVDDIDHLGNRRIRSVGEMAENQFRVGLVRVERAVRERLSLGDLNELMPQDLINAKPISAAVKEFFGSSQLSQFMDQNNPLSEVTHKRRISALGPGGLTRERAGFEVRDVHPTHYGRLCPIETPEGPNIGLINSLSTFARTNNYGFLETPYRKVIDGVVTDEVDYLSAIEEGRYVIAQAIVELDENNRMMDELIACRHKGDSTFMGAADIQYMDVSPQQIISVAASLIPFLEHDDANRALMGANMQRQAVPTLKADKPLVGTGIERTLAVDSGVVVAAKRGGYVDYVDASRIVVKVDEAELTPGEAGIDIYNLTKYTRSNQNTCINQRPCCSVGDPVVRGDVLADGPSTDLGDLALGQNMRIAFMPWNGYNFEDSILISERVAQEDRFTTIHIQELSCIARDTKLGSEEITADIPNVGESALSKLDESGIVYIGAEVKGGDILVGKVTPKGETQLTPEEKLLRAIFGEKASDVKDSSLRVPNSVKGTIIDVQVFTRDGVDKDKRAVEIEEMHIAQAKKDLTEEFQILEDGVLGRARNLLLGAGFDEAQLDAIPRSQLLMQTIDDEAKQTELEQLAEQAEELKADFDKKFEVKRRKITQGDDLAPGVLKIVKVYLAVKRTIQPGDKMAGRHGNKGVISKICPVEDMPYDEKGNPVDIVLNPLGVPSRMNIGQVLEVHMGAAAKGIGNRITEMLEEQRELAELRGYIKEVYELGDEVQQRVDIDSFTDDEVLRLAKNLKGGVPTATPAFDGAKEKEIKQMLALAGLPTSGQLTLCDGRTGNEFERQVTVGYMYMLKLNHLVDDKMHARSTGSYSLVTQQPLGGKAQFGGQRFGEMEVWALEAYGAAYTLQEMLTVKSDDVNGRTQMYKNIVDGNHQMQPGMPESFNVLLKEIRSLGINIELDQK</sequence>
<proteinExistence type="inferred from homology"/>